<comment type="function">
    <text evidence="1">Component of the outer dense fibers (ODF) of spermatozoa which could be involved in sperm tail structure, sperm movement and general organization of cellular cytoskeleton.</text>
</comment>
<comment type="subcellular location">
    <subcellularLocation>
        <location evidence="5">Membrane</location>
        <topology evidence="5">Multi-pass membrane protein</topology>
    </subcellularLocation>
</comment>
<protein>
    <recommendedName>
        <fullName>Outer dense fiber protein 4</fullName>
    </recommendedName>
    <alternativeName>
        <fullName>Outer dense fiber of sperm tails protein 4</fullName>
    </alternativeName>
</protein>
<sequence length="199" mass="22704">MNIRSLERAGRAGKQDGVAVSPGQEEEVQNCVSTHDSNWPVIKDHSVKLHRVSPLLLQCRITHSSRWIAQVLASELSLLAFILLVVMVFSKKWLCFERIRFYQHWTMNVTTKIYTSVHIMSLGLLHIYKSKSYSNSEWESFKLWTNHPAFGVAKITFCLALGLGIILTIWLHLPYIPGLQKLPFFGWIGTVMSFCEGAL</sequence>
<name>ODFP4_BOVIN</name>
<accession>Q0II41</accession>
<dbReference type="EMBL" id="BC122818">
    <property type="protein sequence ID" value="AAI22819.1"/>
    <property type="molecule type" value="mRNA"/>
</dbReference>
<dbReference type="RefSeq" id="NP_001069230.1">
    <property type="nucleotide sequence ID" value="NM_001075762.2"/>
</dbReference>
<dbReference type="FunCoup" id="Q0II41">
    <property type="interactions" value="3"/>
</dbReference>
<dbReference type="STRING" id="9913.ENSBTAP00000019205"/>
<dbReference type="PaxDb" id="9913-ENSBTAP00000019205"/>
<dbReference type="KEGG" id="bta:517977"/>
<dbReference type="CTD" id="146852"/>
<dbReference type="eggNOG" id="ENOG502SXVG">
    <property type="taxonomic scope" value="Eukaryota"/>
</dbReference>
<dbReference type="InParanoid" id="Q0II41"/>
<dbReference type="OrthoDB" id="9620006at2759"/>
<dbReference type="Proteomes" id="UP000009136">
    <property type="component" value="Unplaced"/>
</dbReference>
<dbReference type="GO" id="GO:0016020">
    <property type="term" value="C:membrane"/>
    <property type="evidence" value="ECO:0007669"/>
    <property type="project" value="UniProtKB-SubCell"/>
</dbReference>
<dbReference type="GO" id="GO:0030154">
    <property type="term" value="P:cell differentiation"/>
    <property type="evidence" value="ECO:0007669"/>
    <property type="project" value="UniProtKB-KW"/>
</dbReference>
<dbReference type="GO" id="GO:0007283">
    <property type="term" value="P:spermatogenesis"/>
    <property type="evidence" value="ECO:0007669"/>
    <property type="project" value="UniProtKB-KW"/>
</dbReference>
<feature type="chain" id="PRO_0000304721" description="Outer dense fiber protein 4">
    <location>
        <begin position="1"/>
        <end position="199"/>
    </location>
</feature>
<feature type="transmembrane region" description="Helical" evidence="3">
    <location>
        <begin position="68"/>
        <end position="88"/>
    </location>
</feature>
<feature type="transmembrane region" description="Helical" evidence="3">
    <location>
        <begin position="109"/>
        <end position="128"/>
    </location>
</feature>
<feature type="transmembrane region" description="Helical" evidence="3">
    <location>
        <begin position="159"/>
        <end position="179"/>
    </location>
</feature>
<feature type="region of interest" description="Disordered" evidence="4">
    <location>
        <begin position="1"/>
        <end position="25"/>
    </location>
</feature>
<feature type="compositionally biased region" description="Basic and acidic residues" evidence="4">
    <location>
        <begin position="1"/>
        <end position="14"/>
    </location>
</feature>
<feature type="modified residue" description="Phosphoserine" evidence="2">
    <location>
        <position position="53"/>
    </location>
</feature>
<organism>
    <name type="scientific">Bos taurus</name>
    <name type="common">Bovine</name>
    <dbReference type="NCBI Taxonomy" id="9913"/>
    <lineage>
        <taxon>Eukaryota</taxon>
        <taxon>Metazoa</taxon>
        <taxon>Chordata</taxon>
        <taxon>Craniata</taxon>
        <taxon>Vertebrata</taxon>
        <taxon>Euteleostomi</taxon>
        <taxon>Mammalia</taxon>
        <taxon>Eutheria</taxon>
        <taxon>Laurasiatheria</taxon>
        <taxon>Artiodactyla</taxon>
        <taxon>Ruminantia</taxon>
        <taxon>Pecora</taxon>
        <taxon>Bovidae</taxon>
        <taxon>Bovinae</taxon>
        <taxon>Bos</taxon>
    </lineage>
</organism>
<gene>
    <name type="primary">ODF4</name>
</gene>
<keyword id="KW-0217">Developmental protein</keyword>
<keyword id="KW-0221">Differentiation</keyword>
<keyword id="KW-0472">Membrane</keyword>
<keyword id="KW-0597">Phosphoprotein</keyword>
<keyword id="KW-1185">Reference proteome</keyword>
<keyword id="KW-0744">Spermatogenesis</keyword>
<keyword id="KW-0812">Transmembrane</keyword>
<keyword id="KW-1133">Transmembrane helix</keyword>
<evidence type="ECO:0000250" key="1"/>
<evidence type="ECO:0000250" key="2">
    <source>
        <dbReference type="UniProtKB" id="Q8VI88"/>
    </source>
</evidence>
<evidence type="ECO:0000255" key="3"/>
<evidence type="ECO:0000256" key="4">
    <source>
        <dbReference type="SAM" id="MobiDB-lite"/>
    </source>
</evidence>
<evidence type="ECO:0000305" key="5"/>
<proteinExistence type="evidence at transcript level"/>
<reference key="1">
    <citation type="submission" date="2006-08" db="EMBL/GenBank/DDBJ databases">
        <authorList>
            <consortium name="NIH - Mammalian Gene Collection (MGC) project"/>
        </authorList>
    </citation>
    <scope>NUCLEOTIDE SEQUENCE [LARGE SCALE MRNA]</scope>
    <source>
        <strain>Crossbred X Angus</strain>
        <tissue>Liver</tissue>
    </source>
</reference>